<gene>
    <name type="primary">Mgat5b</name>
</gene>
<keyword id="KW-0025">Alternative splicing</keyword>
<keyword id="KW-1015">Disulfide bond</keyword>
<keyword id="KW-0325">Glycoprotein</keyword>
<keyword id="KW-0328">Glycosyltransferase</keyword>
<keyword id="KW-0333">Golgi apparatus</keyword>
<keyword id="KW-0464">Manganese</keyword>
<keyword id="KW-0472">Membrane</keyword>
<keyword id="KW-0479">Metal-binding</keyword>
<keyword id="KW-1185">Reference proteome</keyword>
<keyword id="KW-0735">Signal-anchor</keyword>
<keyword id="KW-0808">Transferase</keyword>
<keyword id="KW-0812">Transmembrane</keyword>
<keyword id="KW-1133">Transmembrane helix</keyword>
<comment type="function">
    <text evidence="2 5">Glycosyltransferase that acts on alpha-linked mannose of N-glycans and O-mannosyl glycans. Catalyzes the transfer of N-acetylglucosamine (GlcNAc) to the beta 1-6 linkage of the mannose residue of GlcNAc-beta1,2-Man-alpha on both the alpha1,3- and alpha1,6-linked mannose arms in the core structure of N-glycan (By similarity). Also acts on the GlcNAc-beta1,2-Man-alpha1-Ser/Thr moiety, forming a 2,6-branched structure in brain O-mannosyl glycan (PubMed:22715095). Plays an active role in modulating integrin and laminin-dependent adhesion and migration of neuronal cells via its activity in the O-mannosyl glycan pathway.</text>
</comment>
<comment type="catalytic activity">
    <reaction evidence="2">
        <text>N(4)-{beta-D-GlcNAc-(1-&gt;2)-[beta-D-GlcNAc-(1-&gt;4)]-alpha-D-Man-(1-&gt;3)-[beta-D-GlcNAc-(1-&gt;2)-alpha-D-Man-(1-&gt;6)]-beta-D-Man-(1-&gt;4)-beta-D-GlcNAc-(1-&gt;4)-beta-D-GlcNAc}-L-asparaginyl-[protein] + UDP-N-acetyl-alpha-D-glucosamine = N(4)-{beta-D-GlcNAc-(1-&gt;2)-[beta-D-GlcNAc-(1-&gt;4)]-alpha-D-Man-(1-&gt;3)-[beta-D-GlcNAc-(1-&gt;2)-[beta-D-GlcNAc-(1-&gt;6)]-alpha-D-Man-(1-&gt;6)]-beta-D-Man-(1-&gt;4)-beta-D-GlcNAc-(1-&gt;4)-beta-D-GlcNAc}-L-asparaginyl-[protein] + UDP + H(+)</text>
        <dbReference type="Rhea" id="RHEA:16921"/>
        <dbReference type="Rhea" id="RHEA-COMP:14374"/>
        <dbReference type="Rhea" id="RHEA-COMP:14377"/>
        <dbReference type="ChEBI" id="CHEBI:15378"/>
        <dbReference type="ChEBI" id="CHEBI:57705"/>
        <dbReference type="ChEBI" id="CHEBI:58223"/>
        <dbReference type="ChEBI" id="CHEBI:139507"/>
        <dbReference type="ChEBI" id="CHEBI:139510"/>
        <dbReference type="EC" id="2.4.1.155"/>
    </reaction>
</comment>
<comment type="catalytic activity">
    <reaction evidence="2">
        <text>3-O-[N-acetyl-beta-D-glucosaminyl-(1-&gt;2)-alpha-D-mannosyl]-L-seryl-[protein] + UDP-N-acetyl-alpha-D-glucosamine = O(3)-{N-acetyl-beta-D-glucosaminyl-(1-&gt;2)-[N-acetyl-beta-D-glucosaminyl-(1-&gt;6)]-alpha-D-mannosyl}-L-seryl-[protein] + UDP + H(+)</text>
        <dbReference type="Rhea" id="RHEA:56252"/>
        <dbReference type="Rhea" id="RHEA-COMP:14438"/>
        <dbReference type="Rhea" id="RHEA-COMP:14440"/>
        <dbReference type="ChEBI" id="CHEBI:15378"/>
        <dbReference type="ChEBI" id="CHEBI:57705"/>
        <dbReference type="ChEBI" id="CHEBI:58223"/>
        <dbReference type="ChEBI" id="CHEBI:140080"/>
        <dbReference type="ChEBI" id="CHEBI:140085"/>
    </reaction>
</comment>
<comment type="catalytic activity">
    <reaction evidence="2">
        <text>3-O-[N-acetyl-beta-D-glucosaminyl-(1-&gt;2)-alpha-D-mannosyl]-L-threonyl-[protein] + UDP-N-acetyl-alpha-D-glucosamine = O(3)-{N-acetyl-beta-D-glucosaminyl-(1-&gt;2)-[N-acetyl-beta-D-glucosaminyl-(1-&gt;6)]-alpha-D-mannosyl}-L-threonyl-[protein] + UDP + H(+)</text>
        <dbReference type="Rhea" id="RHEA:56256"/>
        <dbReference type="Rhea" id="RHEA-COMP:14439"/>
        <dbReference type="Rhea" id="RHEA-COMP:14441"/>
        <dbReference type="ChEBI" id="CHEBI:15378"/>
        <dbReference type="ChEBI" id="CHEBI:57705"/>
        <dbReference type="ChEBI" id="CHEBI:58223"/>
        <dbReference type="ChEBI" id="CHEBI:140083"/>
        <dbReference type="ChEBI" id="CHEBI:140087"/>
    </reaction>
</comment>
<comment type="cofactor">
    <cofactor evidence="2">
        <name>Mn(2+)</name>
        <dbReference type="ChEBI" id="CHEBI:29035"/>
    </cofactor>
</comment>
<comment type="pathway">
    <text evidence="5">Protein modification; protein glycosylation.</text>
</comment>
<comment type="subcellular location">
    <subcellularLocation>
        <location evidence="4">Golgi apparatus membrane</location>
        <topology evidence="4">Single-pass type II membrane protein</topology>
    </subcellularLocation>
</comment>
<comment type="alternative products">
    <event type="alternative splicing"/>
    <isoform>
        <id>Q765H6-1</id>
        <name>1</name>
        <sequence type="displayed"/>
    </isoform>
    <isoform>
        <id>Q765H6-2</id>
        <name>2</name>
        <sequence type="described" ref="VSP_025736 VSP_025737 VSP_025738"/>
    </isoform>
</comment>
<comment type="tissue specificity">
    <text evidence="4 5">Present in brain (at protein level) (PubMed:16413118). Predominantly expressed in hippocampus, superficial layers of the brain cortex, striatum, nucleus accumbens, a subset of nuclei in the thalamus, inferior colliculus, brain stem and cerebellum (PubMed:16413118, PubMed:22715095).</text>
</comment>
<comment type="disruption phenotype">
    <text evidence="5">Brains from mutant mice display defective biosynthesis of O-mannosyl glycans (PubMed:22715095). Mutant mice that lack both Mgat5 and Mgat5b display no visible changes in brain anatomy, but their brains display defective biosynthesis of both O-mannosyl glycans and N-linked glycans (PubMed:22715095).</text>
</comment>
<comment type="similarity">
    <text evidence="9">Belongs to the glycosyltransferase 18 family.</text>
</comment>
<sequence>MITVNPDGKIMVRRCLVTLRPFRLFVLGIGFFTLCFLMTSLGGQFSARRLGDSPFTIRTEVPGSPESRGALRKMSDLLELMVKRMDMLARLENSSELHRTASVAHLAADRLTPGASLIERIQAIAQNVSDIAVKVDQILRHSLILHSKVSEGRRDQCEAPSDPKFPDCSGKVEWMRARWTSDPCYAFFGVDGTECSFLIYLSEVEWFCPPLPWRNQTAARTAPKSLPRVQAVFRSNLSHLLELMGSGKESLIFMKKRTRRFTAQWTKAAKYLAQKLGDIRRDQKQILVHIGFLTEESGDVFSPRVLKGGPLGEMVQWADILAALYVLGHSLRITVSLKELQSNLGVPPGRGNCPLTVPLPFDLIYTDYHGLQQMKQHMGLSFKKYRCRIRVIDTFGTEPAYNHEEYATLHGYRTNWGYWNLNPKQFMTMFPHTPDNSFMGFVSEELNETEKQLIKDGKASNMAVVYGKEASIWKLQGKEKFLAVLNKYMEIHGTVYYESQRPPEVPAFVKNHGLLPQPEFQQLLRKAKLFIGFGFPYEGPAPLEAIANGCIFLQSRFSPPHSSLNHEFFRGKPTSREVFSQHPYAENFIGKPHVWTVDYNNSDEFETAIKAIMNTQVDPYLPYEYTCAGMLERINAYIQHQDFCVGPSPLPPGASTAQSPFVLAPNATHLEWAQNISSVPGAWPPTHSLRAWLAAPGRACTDACLDHGLICEPSFFPFLNSQNSFLKLQVPCDSTEWEMHHLYPAFAQPGQECYLQKEPLLFSCAGASTKYQRLCPCRDFRKGQVALCQGCL</sequence>
<accession>Q765H6</accession>
<accession>Q8C7T8</accession>
<dbReference type="EC" id="2.4.1.-"/>
<dbReference type="EC" id="2.4.1.155" evidence="2"/>
<dbReference type="EMBL" id="AB116028">
    <property type="protein sequence ID" value="BAD08454.1"/>
    <property type="molecule type" value="mRNA"/>
</dbReference>
<dbReference type="EMBL" id="AB119127">
    <property type="protein sequence ID" value="BAC87707.1"/>
    <property type="molecule type" value="mRNA"/>
</dbReference>
<dbReference type="EMBL" id="AK049266">
    <property type="protein sequence ID" value="BAC33645.1"/>
    <property type="molecule type" value="mRNA"/>
</dbReference>
<dbReference type="EMBL" id="AL627205">
    <property type="status" value="NOT_ANNOTATED_CDS"/>
    <property type="molecule type" value="Genomic_DNA"/>
</dbReference>
<dbReference type="EMBL" id="AL663089">
    <property type="status" value="NOT_ANNOTATED_CDS"/>
    <property type="molecule type" value="Genomic_DNA"/>
</dbReference>
<dbReference type="EMBL" id="BC094604">
    <property type="protein sequence ID" value="AAH94604.1"/>
    <property type="molecule type" value="mRNA"/>
</dbReference>
<dbReference type="CCDS" id="CCDS25682.1">
    <molecule id="Q765H6-1"/>
</dbReference>
<dbReference type="RefSeq" id="NP_766536.2">
    <molecule id="Q765H6-1"/>
    <property type="nucleotide sequence ID" value="NM_172948.3"/>
</dbReference>
<dbReference type="SMR" id="Q765H6"/>
<dbReference type="BioGRID" id="234512">
    <property type="interactions" value="3"/>
</dbReference>
<dbReference type="FunCoup" id="Q765H6">
    <property type="interactions" value="567"/>
</dbReference>
<dbReference type="STRING" id="10090.ENSMUSP00000099316"/>
<dbReference type="CAZy" id="GT18">
    <property type="family name" value="Glycosyltransferase Family 18"/>
</dbReference>
<dbReference type="GlyConnect" id="2120">
    <property type="glycosylation" value="1 N-Linked glycan (1 site)"/>
</dbReference>
<dbReference type="GlyCosmos" id="Q765H6">
    <property type="glycosylation" value="3 sites, 1 glycan"/>
</dbReference>
<dbReference type="GlyGen" id="Q765H6">
    <property type="glycosylation" value="4 sites, 4 N-linked glycans (3 sites)"/>
</dbReference>
<dbReference type="iPTMnet" id="Q765H6"/>
<dbReference type="PhosphoSitePlus" id="Q765H6"/>
<dbReference type="PaxDb" id="10090-ENSMUSP00000099316"/>
<dbReference type="ProteomicsDB" id="290229">
    <molecule id="Q765H6-1"/>
</dbReference>
<dbReference type="ProteomicsDB" id="290230">
    <molecule id="Q765H6-2"/>
</dbReference>
<dbReference type="Antibodypedia" id="46175">
    <property type="antibodies" value="55 antibodies from 17 providers"/>
</dbReference>
<dbReference type="DNASU" id="268510"/>
<dbReference type="Ensembl" id="ENSMUST00000103027.10">
    <molecule id="Q765H6-1"/>
    <property type="protein sequence ID" value="ENSMUSP00000099316.4"/>
    <property type="gene ID" value="ENSMUSG00000043857.17"/>
</dbReference>
<dbReference type="GeneID" id="268510"/>
<dbReference type="KEGG" id="mmu:268510"/>
<dbReference type="UCSC" id="uc007mmu.1">
    <molecule id="Q765H6-1"/>
    <property type="organism name" value="mouse"/>
</dbReference>
<dbReference type="UCSC" id="uc007mmv.1">
    <molecule id="Q765H6-2"/>
    <property type="organism name" value="mouse"/>
</dbReference>
<dbReference type="AGR" id="MGI:3606200"/>
<dbReference type="CTD" id="146664"/>
<dbReference type="MGI" id="MGI:3606200">
    <property type="gene designation" value="Mgat5b"/>
</dbReference>
<dbReference type="VEuPathDB" id="HostDB:ENSMUSG00000043857"/>
<dbReference type="eggNOG" id="ENOG502QWJG">
    <property type="taxonomic scope" value="Eukaryota"/>
</dbReference>
<dbReference type="GeneTree" id="ENSGT00940000153470"/>
<dbReference type="HOGENOM" id="CLU_016749_0_0_1"/>
<dbReference type="InParanoid" id="Q765H6"/>
<dbReference type="OMA" id="SRFPECP"/>
<dbReference type="OrthoDB" id="2113294at2759"/>
<dbReference type="PhylomeDB" id="Q765H6"/>
<dbReference type="TreeFam" id="TF313714"/>
<dbReference type="UniPathway" id="UPA00378"/>
<dbReference type="BioGRID-ORCS" id="268510">
    <property type="hits" value="2 hits in 79 CRISPR screens"/>
</dbReference>
<dbReference type="ChiTaRS" id="Mgat5b">
    <property type="organism name" value="mouse"/>
</dbReference>
<dbReference type="PRO" id="PR:Q765H6"/>
<dbReference type="Proteomes" id="UP000000589">
    <property type="component" value="Chromosome 11"/>
</dbReference>
<dbReference type="RNAct" id="Q765H6">
    <property type="molecule type" value="protein"/>
</dbReference>
<dbReference type="Bgee" id="ENSMUSG00000043857">
    <property type="expression patterns" value="Expressed in embryonic brain and 80 other cell types or tissues"/>
</dbReference>
<dbReference type="ExpressionAtlas" id="Q765H6">
    <property type="expression patterns" value="baseline and differential"/>
</dbReference>
<dbReference type="GO" id="GO:0005794">
    <property type="term" value="C:Golgi apparatus"/>
    <property type="evidence" value="ECO:0000314"/>
    <property type="project" value="MGI"/>
</dbReference>
<dbReference type="GO" id="GO:0000139">
    <property type="term" value="C:Golgi membrane"/>
    <property type="evidence" value="ECO:0007669"/>
    <property type="project" value="UniProtKB-SubCell"/>
</dbReference>
<dbReference type="GO" id="GO:0030144">
    <property type="term" value="F:alpha-1,6-mannosylglycoprotein 6-beta-N-acetylglucosaminyltransferase activity"/>
    <property type="evidence" value="ECO:0000314"/>
    <property type="project" value="MGI"/>
</dbReference>
<dbReference type="GO" id="GO:0030145">
    <property type="term" value="F:manganese ion binding"/>
    <property type="evidence" value="ECO:0007669"/>
    <property type="project" value="Ensembl"/>
</dbReference>
<dbReference type="GO" id="GO:0006487">
    <property type="term" value="P:protein N-linked glycosylation"/>
    <property type="evidence" value="ECO:0000314"/>
    <property type="project" value="MGI"/>
</dbReference>
<dbReference type="GO" id="GO:0018242">
    <property type="term" value="P:protein O-linked glycosylation via serine"/>
    <property type="evidence" value="ECO:0007669"/>
    <property type="project" value="Ensembl"/>
</dbReference>
<dbReference type="InterPro" id="IPR026116">
    <property type="entry name" value="GT18_cat"/>
</dbReference>
<dbReference type="InterPro" id="IPR052105">
    <property type="entry name" value="MGAT5_Glycosyltransferase"/>
</dbReference>
<dbReference type="PANTHER" id="PTHR15075:SF6">
    <property type="entry name" value="ALPHA-1,6-MANNOSYLGLYCOPROTEIN 6-BETA-N-ACETYLGLUCOSAMINYLTRANSFERASE B"/>
    <property type="match status" value="1"/>
</dbReference>
<dbReference type="PANTHER" id="PTHR15075">
    <property type="entry name" value="ALPHA-MANNOSIDE BETA-1,6-N-ACETYLGLUCOSAMINYLTRANSFERASE"/>
    <property type="match status" value="1"/>
</dbReference>
<dbReference type="Pfam" id="PF15024">
    <property type="entry name" value="Glyco_transf_18"/>
    <property type="match status" value="1"/>
</dbReference>
<protein>
    <recommendedName>
        <fullName>Alpha-1,6-mannosylglycoprotein 6-beta-N-acetylglucosaminyltransferase B</fullName>
        <ecNumber>2.4.1.-</ecNumber>
        <ecNumber evidence="2">2.4.1.155</ecNumber>
    </recommendedName>
    <alternativeName>
        <fullName>Alpha-mannoside beta-1,6-N-acetylglucosaminyltransferase B</fullName>
    </alternativeName>
    <alternativeName>
        <fullName>GlcNAc-T Vb</fullName>
        <shortName evidence="6">GNT-Vb</shortName>
    </alternativeName>
    <alternativeName>
        <fullName>Mannoside acetylglucosaminyltransferase 5B</fullName>
    </alternativeName>
    <alternativeName>
        <fullName>N-acetylglucosaminyl-transferase Vb</fullName>
    </alternativeName>
    <alternativeName>
        <fullName>N-acetylglucosaminyltransferase IX</fullName>
        <shortName evidence="8">GNT-IX</shortName>
    </alternativeName>
</protein>
<feature type="chain" id="PRO_0000288612" description="Alpha-1,6-mannosylglycoprotein 6-beta-N-acetylglucosaminyltransferase B">
    <location>
        <begin position="1"/>
        <end position="792"/>
    </location>
</feature>
<feature type="topological domain" description="Cytoplasmic" evidence="3">
    <location>
        <begin position="1"/>
        <end position="24"/>
    </location>
</feature>
<feature type="transmembrane region" description="Helical; Signal-anchor for type II membrane protein" evidence="3">
    <location>
        <begin position="25"/>
        <end position="45"/>
    </location>
</feature>
<feature type="topological domain" description="Lumenal" evidence="3">
    <location>
        <begin position="46"/>
        <end position="792"/>
    </location>
</feature>
<feature type="glycosylation site" description="N-linked (GlcNAc...) asparagine" evidence="3">
    <location>
        <position position="127"/>
    </location>
</feature>
<feature type="glycosylation site" description="N-linked (GlcNAc...) asparagine" evidence="3">
    <location>
        <position position="675"/>
    </location>
</feature>
<feature type="disulfide bond" evidence="1">
    <location>
        <begin position="157"/>
        <end position="195"/>
    </location>
</feature>
<feature type="disulfide bond" evidence="1">
    <location>
        <begin position="168"/>
        <end position="208"/>
    </location>
</feature>
<feature type="disulfide bond" evidence="1">
    <location>
        <begin position="184"/>
        <end position="353"/>
    </location>
</feature>
<feature type="disulfide bond" evidence="1">
    <location>
        <begin position="387"/>
        <end position="644"/>
    </location>
</feature>
<feature type="disulfide bond" evidence="1">
    <location>
        <begin position="700"/>
        <end position="775"/>
    </location>
</feature>
<feature type="disulfide bond" evidence="1">
    <location>
        <begin position="704"/>
        <end position="777"/>
    </location>
</feature>
<feature type="disulfide bond" evidence="1">
    <location>
        <begin position="711"/>
        <end position="764"/>
    </location>
</feature>
<feature type="disulfide bond" evidence="1">
    <location>
        <begin position="732"/>
        <end position="753"/>
    </location>
</feature>
<feature type="disulfide bond" evidence="1">
    <location>
        <begin position="788"/>
        <end position="791"/>
    </location>
</feature>
<feature type="splice variant" id="VSP_025736" description="In isoform 2." evidence="7">
    <location>
        <begin position="1"/>
        <end position="377"/>
    </location>
</feature>
<feature type="splice variant" id="VSP_025737" description="In isoform 2." evidence="7">
    <original>MGLSFKKYRCRIRVIDTFGTEPAYNHEEYATLHGYRTNWGYWNLNPKQFMTMFP</original>
    <variation>MALGVPCSELQASPPMGALPTRSAETPGRGISREQASAWTFDNLFFPLCGRAVA</variation>
    <location>
        <begin position="378"/>
        <end position="431"/>
    </location>
</feature>
<feature type="splice variant" id="VSP_025738" description="In isoform 2." evidence="7">
    <location>
        <begin position="475"/>
        <end position="476"/>
    </location>
</feature>
<proteinExistence type="evidence at protein level"/>
<organism>
    <name type="scientific">Mus musculus</name>
    <name type="common">Mouse</name>
    <dbReference type="NCBI Taxonomy" id="10090"/>
    <lineage>
        <taxon>Eukaryota</taxon>
        <taxon>Metazoa</taxon>
        <taxon>Chordata</taxon>
        <taxon>Craniata</taxon>
        <taxon>Vertebrata</taxon>
        <taxon>Euteleostomi</taxon>
        <taxon>Mammalia</taxon>
        <taxon>Eutheria</taxon>
        <taxon>Euarchontoglires</taxon>
        <taxon>Glires</taxon>
        <taxon>Rodentia</taxon>
        <taxon>Myomorpha</taxon>
        <taxon>Muroidea</taxon>
        <taxon>Muridae</taxon>
        <taxon>Murinae</taxon>
        <taxon>Mus</taxon>
        <taxon>Mus</taxon>
    </lineage>
</organism>
<reference key="1">
    <citation type="journal article" date="2003" name="FEBS Lett.">
        <title>A novel beta(1,6)-N-acetylglucosaminyltransferase V (GnT-VB).</title>
        <authorList>
            <person name="Kaneko M."/>
            <person name="Alvarez-Manilla G."/>
            <person name="Kamar M."/>
            <person name="Lee I."/>
            <person name="Lee J.-K."/>
            <person name="Troupe K."/>
            <person name="Zhang W."/>
            <person name="Osawa M."/>
            <person name="Pierce M."/>
        </authorList>
    </citation>
    <scope>NUCLEOTIDE SEQUENCE [MRNA] (ISOFORM 1)</scope>
    <source>
        <tissue>Brain</tissue>
    </source>
</reference>
<reference key="2">
    <citation type="journal article" date="2006" name="Biochim. Biophys. Acta">
        <title>Demonstration of the expression and the enzymatic activity of N-acetylglucosaminyltransferase IX in the mouse brain.</title>
        <authorList>
            <person name="Inamori K."/>
            <person name="Mita S."/>
            <person name="Gu J."/>
            <person name="Mizuno-Horikawa Y."/>
            <person name="Miyoshi E."/>
            <person name="Dennis J.W."/>
            <person name="Taniguchi N."/>
        </authorList>
    </citation>
    <scope>NUCLEOTIDE SEQUENCE [MRNA] (ISOFORM 1)</scope>
    <scope>SUBCELLULAR LOCATION</scope>
    <scope>TISSUE SPECIFICITY</scope>
    <source>
        <tissue>Brain</tissue>
    </source>
</reference>
<reference key="3">
    <citation type="journal article" date="2005" name="Science">
        <title>The transcriptional landscape of the mammalian genome.</title>
        <authorList>
            <person name="Carninci P."/>
            <person name="Kasukawa T."/>
            <person name="Katayama S."/>
            <person name="Gough J."/>
            <person name="Frith M.C."/>
            <person name="Maeda N."/>
            <person name="Oyama R."/>
            <person name="Ravasi T."/>
            <person name="Lenhard B."/>
            <person name="Wells C."/>
            <person name="Kodzius R."/>
            <person name="Shimokawa K."/>
            <person name="Bajic V.B."/>
            <person name="Brenner S.E."/>
            <person name="Batalov S."/>
            <person name="Forrest A.R."/>
            <person name="Zavolan M."/>
            <person name="Davis M.J."/>
            <person name="Wilming L.G."/>
            <person name="Aidinis V."/>
            <person name="Allen J.E."/>
            <person name="Ambesi-Impiombato A."/>
            <person name="Apweiler R."/>
            <person name="Aturaliya R.N."/>
            <person name="Bailey T.L."/>
            <person name="Bansal M."/>
            <person name="Baxter L."/>
            <person name="Beisel K.W."/>
            <person name="Bersano T."/>
            <person name="Bono H."/>
            <person name="Chalk A.M."/>
            <person name="Chiu K.P."/>
            <person name="Choudhary V."/>
            <person name="Christoffels A."/>
            <person name="Clutterbuck D.R."/>
            <person name="Crowe M.L."/>
            <person name="Dalla E."/>
            <person name="Dalrymple B.P."/>
            <person name="de Bono B."/>
            <person name="Della Gatta G."/>
            <person name="di Bernardo D."/>
            <person name="Down T."/>
            <person name="Engstrom P."/>
            <person name="Fagiolini M."/>
            <person name="Faulkner G."/>
            <person name="Fletcher C.F."/>
            <person name="Fukushima T."/>
            <person name="Furuno M."/>
            <person name="Futaki S."/>
            <person name="Gariboldi M."/>
            <person name="Georgii-Hemming P."/>
            <person name="Gingeras T.R."/>
            <person name="Gojobori T."/>
            <person name="Green R.E."/>
            <person name="Gustincich S."/>
            <person name="Harbers M."/>
            <person name="Hayashi Y."/>
            <person name="Hensch T.K."/>
            <person name="Hirokawa N."/>
            <person name="Hill D."/>
            <person name="Huminiecki L."/>
            <person name="Iacono M."/>
            <person name="Ikeo K."/>
            <person name="Iwama A."/>
            <person name="Ishikawa T."/>
            <person name="Jakt M."/>
            <person name="Kanapin A."/>
            <person name="Katoh M."/>
            <person name="Kawasawa Y."/>
            <person name="Kelso J."/>
            <person name="Kitamura H."/>
            <person name="Kitano H."/>
            <person name="Kollias G."/>
            <person name="Krishnan S.P."/>
            <person name="Kruger A."/>
            <person name="Kummerfeld S.K."/>
            <person name="Kurochkin I.V."/>
            <person name="Lareau L.F."/>
            <person name="Lazarevic D."/>
            <person name="Lipovich L."/>
            <person name="Liu J."/>
            <person name="Liuni S."/>
            <person name="McWilliam S."/>
            <person name="Madan Babu M."/>
            <person name="Madera M."/>
            <person name="Marchionni L."/>
            <person name="Matsuda H."/>
            <person name="Matsuzawa S."/>
            <person name="Miki H."/>
            <person name="Mignone F."/>
            <person name="Miyake S."/>
            <person name="Morris K."/>
            <person name="Mottagui-Tabar S."/>
            <person name="Mulder N."/>
            <person name="Nakano N."/>
            <person name="Nakauchi H."/>
            <person name="Ng P."/>
            <person name="Nilsson R."/>
            <person name="Nishiguchi S."/>
            <person name="Nishikawa S."/>
            <person name="Nori F."/>
            <person name="Ohara O."/>
            <person name="Okazaki Y."/>
            <person name="Orlando V."/>
            <person name="Pang K.C."/>
            <person name="Pavan W.J."/>
            <person name="Pavesi G."/>
            <person name="Pesole G."/>
            <person name="Petrovsky N."/>
            <person name="Piazza S."/>
            <person name="Reed J."/>
            <person name="Reid J.F."/>
            <person name="Ring B.Z."/>
            <person name="Ringwald M."/>
            <person name="Rost B."/>
            <person name="Ruan Y."/>
            <person name="Salzberg S.L."/>
            <person name="Sandelin A."/>
            <person name="Schneider C."/>
            <person name="Schoenbach C."/>
            <person name="Sekiguchi K."/>
            <person name="Semple C.A."/>
            <person name="Seno S."/>
            <person name="Sessa L."/>
            <person name="Sheng Y."/>
            <person name="Shibata Y."/>
            <person name="Shimada H."/>
            <person name="Shimada K."/>
            <person name="Silva D."/>
            <person name="Sinclair B."/>
            <person name="Sperling S."/>
            <person name="Stupka E."/>
            <person name="Sugiura K."/>
            <person name="Sultana R."/>
            <person name="Takenaka Y."/>
            <person name="Taki K."/>
            <person name="Tammoja K."/>
            <person name="Tan S.L."/>
            <person name="Tang S."/>
            <person name="Taylor M.S."/>
            <person name="Tegner J."/>
            <person name="Teichmann S.A."/>
            <person name="Ueda H.R."/>
            <person name="van Nimwegen E."/>
            <person name="Verardo R."/>
            <person name="Wei C.L."/>
            <person name="Yagi K."/>
            <person name="Yamanishi H."/>
            <person name="Zabarovsky E."/>
            <person name="Zhu S."/>
            <person name="Zimmer A."/>
            <person name="Hide W."/>
            <person name="Bult C."/>
            <person name="Grimmond S.M."/>
            <person name="Teasdale R.D."/>
            <person name="Liu E.T."/>
            <person name="Brusic V."/>
            <person name="Quackenbush J."/>
            <person name="Wahlestedt C."/>
            <person name="Mattick J.S."/>
            <person name="Hume D.A."/>
            <person name="Kai C."/>
            <person name="Sasaki D."/>
            <person name="Tomaru Y."/>
            <person name="Fukuda S."/>
            <person name="Kanamori-Katayama M."/>
            <person name="Suzuki M."/>
            <person name="Aoki J."/>
            <person name="Arakawa T."/>
            <person name="Iida J."/>
            <person name="Imamura K."/>
            <person name="Itoh M."/>
            <person name="Kato T."/>
            <person name="Kawaji H."/>
            <person name="Kawagashira N."/>
            <person name="Kawashima T."/>
            <person name="Kojima M."/>
            <person name="Kondo S."/>
            <person name="Konno H."/>
            <person name="Nakano K."/>
            <person name="Ninomiya N."/>
            <person name="Nishio T."/>
            <person name="Okada M."/>
            <person name="Plessy C."/>
            <person name="Shibata K."/>
            <person name="Shiraki T."/>
            <person name="Suzuki S."/>
            <person name="Tagami M."/>
            <person name="Waki K."/>
            <person name="Watahiki A."/>
            <person name="Okamura-Oho Y."/>
            <person name="Suzuki H."/>
            <person name="Kawai J."/>
            <person name="Hayashizaki Y."/>
        </authorList>
    </citation>
    <scope>NUCLEOTIDE SEQUENCE [LARGE SCALE MRNA] (ISOFORM 2)</scope>
    <source>
        <strain>C57BL/6J</strain>
        <tissue>Embryonic stem cell</tissue>
    </source>
</reference>
<reference key="4">
    <citation type="journal article" date="2009" name="PLoS Biol.">
        <title>Lineage-specific biology revealed by a finished genome assembly of the mouse.</title>
        <authorList>
            <person name="Church D.M."/>
            <person name="Goodstadt L."/>
            <person name="Hillier L.W."/>
            <person name="Zody M.C."/>
            <person name="Goldstein S."/>
            <person name="She X."/>
            <person name="Bult C.J."/>
            <person name="Agarwala R."/>
            <person name="Cherry J.L."/>
            <person name="DiCuccio M."/>
            <person name="Hlavina W."/>
            <person name="Kapustin Y."/>
            <person name="Meric P."/>
            <person name="Maglott D."/>
            <person name="Birtle Z."/>
            <person name="Marques A.C."/>
            <person name="Graves T."/>
            <person name="Zhou S."/>
            <person name="Teague B."/>
            <person name="Potamousis K."/>
            <person name="Churas C."/>
            <person name="Place M."/>
            <person name="Herschleb J."/>
            <person name="Runnheim R."/>
            <person name="Forrest D."/>
            <person name="Amos-Landgraf J."/>
            <person name="Schwartz D.C."/>
            <person name="Cheng Z."/>
            <person name="Lindblad-Toh K."/>
            <person name="Eichler E.E."/>
            <person name="Ponting C.P."/>
        </authorList>
    </citation>
    <scope>NUCLEOTIDE SEQUENCE [LARGE SCALE GENOMIC DNA]</scope>
    <source>
        <strain>C57BL/6J</strain>
    </source>
</reference>
<reference key="5">
    <citation type="journal article" date="2004" name="Genome Res.">
        <title>The status, quality, and expansion of the NIH full-length cDNA project: the Mammalian Gene Collection (MGC).</title>
        <authorList>
            <consortium name="The MGC Project Team"/>
        </authorList>
    </citation>
    <scope>NUCLEOTIDE SEQUENCE [LARGE SCALE MRNA] (ISOFORM 1)</scope>
    <source>
        <strain>C57BL/6J</strain>
        <tissue>Embryonic brain</tissue>
    </source>
</reference>
<reference key="6">
    <citation type="journal article" date="2012" name="J. Biol. Chem.">
        <title>Developmental expression of the neuron-specific N-acetylglucosaminyltransferase Vb (GnT-Vb/IX) and identification of its in vivo glycan products in comparison with those of its paralog, GnT-V.</title>
        <authorList>
            <person name="Lee J.K."/>
            <person name="Matthews R.T."/>
            <person name="Lim J.M."/>
            <person name="Swanier K."/>
            <person name="Wells L."/>
            <person name="Pierce J.M."/>
        </authorList>
    </citation>
    <scope>FUNCTION</scope>
    <scope>DISRUPTION PHENOTYPE</scope>
    <scope>PATHWAY</scope>
    <scope>TISSUE SPECIFICITY</scope>
</reference>
<evidence type="ECO:0000250" key="1">
    <source>
        <dbReference type="UniProtKB" id="Q09328"/>
    </source>
</evidence>
<evidence type="ECO:0000250" key="2">
    <source>
        <dbReference type="UniProtKB" id="Q3V5L5"/>
    </source>
</evidence>
<evidence type="ECO:0000255" key="3"/>
<evidence type="ECO:0000269" key="4">
    <source>
    </source>
</evidence>
<evidence type="ECO:0000269" key="5">
    <source>
    </source>
</evidence>
<evidence type="ECO:0000303" key="6">
    <source>
    </source>
</evidence>
<evidence type="ECO:0000303" key="7">
    <source>
    </source>
</evidence>
<evidence type="ECO:0000303" key="8">
    <source>
    </source>
</evidence>
<evidence type="ECO:0000305" key="9"/>
<name>MGT5B_MOUSE</name>